<evidence type="ECO:0000255" key="1">
    <source>
        <dbReference type="HAMAP-Rule" id="MF_00176"/>
    </source>
</evidence>
<feature type="chain" id="PRO_1000098042" description="Serine--tRNA ligase">
    <location>
        <begin position="1"/>
        <end position="432"/>
    </location>
</feature>
<feature type="binding site" evidence="1">
    <location>
        <begin position="235"/>
        <end position="237"/>
    </location>
    <ligand>
        <name>L-serine</name>
        <dbReference type="ChEBI" id="CHEBI:33384"/>
    </ligand>
</feature>
<feature type="binding site" evidence="1">
    <location>
        <begin position="266"/>
        <end position="268"/>
    </location>
    <ligand>
        <name>ATP</name>
        <dbReference type="ChEBI" id="CHEBI:30616"/>
    </ligand>
</feature>
<feature type="binding site" evidence="1">
    <location>
        <position position="289"/>
    </location>
    <ligand>
        <name>L-serine</name>
        <dbReference type="ChEBI" id="CHEBI:33384"/>
    </ligand>
</feature>
<feature type="binding site" evidence="1">
    <location>
        <begin position="353"/>
        <end position="356"/>
    </location>
    <ligand>
        <name>ATP</name>
        <dbReference type="ChEBI" id="CHEBI:30616"/>
    </ligand>
</feature>
<feature type="binding site" evidence="1">
    <location>
        <position position="388"/>
    </location>
    <ligand>
        <name>L-serine</name>
        <dbReference type="ChEBI" id="CHEBI:33384"/>
    </ligand>
</feature>
<accession>B2JEF5</accession>
<dbReference type="EC" id="6.1.1.11" evidence="1"/>
<dbReference type="EMBL" id="CP001043">
    <property type="protein sequence ID" value="ACC69832.1"/>
    <property type="molecule type" value="Genomic_DNA"/>
</dbReference>
<dbReference type="RefSeq" id="WP_012400053.1">
    <property type="nucleotide sequence ID" value="NC_010622.1"/>
</dbReference>
<dbReference type="SMR" id="B2JEF5"/>
<dbReference type="STRING" id="391038.Bphy_0642"/>
<dbReference type="KEGG" id="bph:Bphy_0642"/>
<dbReference type="eggNOG" id="COG0172">
    <property type="taxonomic scope" value="Bacteria"/>
</dbReference>
<dbReference type="HOGENOM" id="CLU_023797_1_1_4"/>
<dbReference type="OrthoDB" id="9804647at2"/>
<dbReference type="UniPathway" id="UPA00906">
    <property type="reaction ID" value="UER00895"/>
</dbReference>
<dbReference type="Proteomes" id="UP000001192">
    <property type="component" value="Chromosome 1"/>
</dbReference>
<dbReference type="GO" id="GO:0005737">
    <property type="term" value="C:cytoplasm"/>
    <property type="evidence" value="ECO:0007669"/>
    <property type="project" value="UniProtKB-SubCell"/>
</dbReference>
<dbReference type="GO" id="GO:0005524">
    <property type="term" value="F:ATP binding"/>
    <property type="evidence" value="ECO:0007669"/>
    <property type="project" value="UniProtKB-UniRule"/>
</dbReference>
<dbReference type="GO" id="GO:0004828">
    <property type="term" value="F:serine-tRNA ligase activity"/>
    <property type="evidence" value="ECO:0007669"/>
    <property type="project" value="UniProtKB-UniRule"/>
</dbReference>
<dbReference type="GO" id="GO:0016260">
    <property type="term" value="P:selenocysteine biosynthetic process"/>
    <property type="evidence" value="ECO:0007669"/>
    <property type="project" value="UniProtKB-UniRule"/>
</dbReference>
<dbReference type="GO" id="GO:0006434">
    <property type="term" value="P:seryl-tRNA aminoacylation"/>
    <property type="evidence" value="ECO:0007669"/>
    <property type="project" value="UniProtKB-UniRule"/>
</dbReference>
<dbReference type="CDD" id="cd00770">
    <property type="entry name" value="SerRS_core"/>
    <property type="match status" value="1"/>
</dbReference>
<dbReference type="Gene3D" id="3.30.930.10">
    <property type="entry name" value="Bira Bifunctional Protein, Domain 2"/>
    <property type="match status" value="1"/>
</dbReference>
<dbReference type="Gene3D" id="1.10.287.40">
    <property type="entry name" value="Serine-tRNA synthetase, tRNA binding domain"/>
    <property type="match status" value="1"/>
</dbReference>
<dbReference type="HAMAP" id="MF_00176">
    <property type="entry name" value="Ser_tRNA_synth_type1"/>
    <property type="match status" value="1"/>
</dbReference>
<dbReference type="InterPro" id="IPR002314">
    <property type="entry name" value="aa-tRNA-synt_IIb"/>
</dbReference>
<dbReference type="InterPro" id="IPR006195">
    <property type="entry name" value="aa-tRNA-synth_II"/>
</dbReference>
<dbReference type="InterPro" id="IPR045864">
    <property type="entry name" value="aa-tRNA-synth_II/BPL/LPL"/>
</dbReference>
<dbReference type="InterPro" id="IPR002317">
    <property type="entry name" value="Ser-tRNA-ligase_type_1"/>
</dbReference>
<dbReference type="InterPro" id="IPR015866">
    <property type="entry name" value="Ser-tRNA-synth_1_N"/>
</dbReference>
<dbReference type="InterPro" id="IPR042103">
    <property type="entry name" value="SerRS_1_N_sf"/>
</dbReference>
<dbReference type="InterPro" id="IPR033729">
    <property type="entry name" value="SerRS_core"/>
</dbReference>
<dbReference type="InterPro" id="IPR010978">
    <property type="entry name" value="tRNA-bd_arm"/>
</dbReference>
<dbReference type="NCBIfam" id="TIGR00414">
    <property type="entry name" value="serS"/>
    <property type="match status" value="1"/>
</dbReference>
<dbReference type="PANTHER" id="PTHR43697:SF1">
    <property type="entry name" value="SERINE--TRNA LIGASE"/>
    <property type="match status" value="1"/>
</dbReference>
<dbReference type="PANTHER" id="PTHR43697">
    <property type="entry name" value="SERYL-TRNA SYNTHETASE"/>
    <property type="match status" value="1"/>
</dbReference>
<dbReference type="Pfam" id="PF02403">
    <property type="entry name" value="Seryl_tRNA_N"/>
    <property type="match status" value="1"/>
</dbReference>
<dbReference type="Pfam" id="PF00587">
    <property type="entry name" value="tRNA-synt_2b"/>
    <property type="match status" value="1"/>
</dbReference>
<dbReference type="PIRSF" id="PIRSF001529">
    <property type="entry name" value="Ser-tRNA-synth_IIa"/>
    <property type="match status" value="1"/>
</dbReference>
<dbReference type="PRINTS" id="PR00981">
    <property type="entry name" value="TRNASYNTHSER"/>
</dbReference>
<dbReference type="SUPFAM" id="SSF55681">
    <property type="entry name" value="Class II aaRS and biotin synthetases"/>
    <property type="match status" value="1"/>
</dbReference>
<dbReference type="SUPFAM" id="SSF46589">
    <property type="entry name" value="tRNA-binding arm"/>
    <property type="match status" value="1"/>
</dbReference>
<dbReference type="PROSITE" id="PS50862">
    <property type="entry name" value="AA_TRNA_LIGASE_II"/>
    <property type="match status" value="1"/>
</dbReference>
<gene>
    <name evidence="1" type="primary">serS</name>
    <name type="ordered locus">Bphy_0642</name>
</gene>
<comment type="function">
    <text evidence="1">Catalyzes the attachment of serine to tRNA(Ser). Is also able to aminoacylate tRNA(Sec) with serine, to form the misacylated tRNA L-seryl-tRNA(Sec), which will be further converted into selenocysteinyl-tRNA(Sec).</text>
</comment>
<comment type="catalytic activity">
    <reaction evidence="1">
        <text>tRNA(Ser) + L-serine + ATP = L-seryl-tRNA(Ser) + AMP + diphosphate + H(+)</text>
        <dbReference type="Rhea" id="RHEA:12292"/>
        <dbReference type="Rhea" id="RHEA-COMP:9669"/>
        <dbReference type="Rhea" id="RHEA-COMP:9703"/>
        <dbReference type="ChEBI" id="CHEBI:15378"/>
        <dbReference type="ChEBI" id="CHEBI:30616"/>
        <dbReference type="ChEBI" id="CHEBI:33019"/>
        <dbReference type="ChEBI" id="CHEBI:33384"/>
        <dbReference type="ChEBI" id="CHEBI:78442"/>
        <dbReference type="ChEBI" id="CHEBI:78533"/>
        <dbReference type="ChEBI" id="CHEBI:456215"/>
        <dbReference type="EC" id="6.1.1.11"/>
    </reaction>
</comment>
<comment type="catalytic activity">
    <reaction evidence="1">
        <text>tRNA(Sec) + L-serine + ATP = L-seryl-tRNA(Sec) + AMP + diphosphate + H(+)</text>
        <dbReference type="Rhea" id="RHEA:42580"/>
        <dbReference type="Rhea" id="RHEA-COMP:9742"/>
        <dbReference type="Rhea" id="RHEA-COMP:10128"/>
        <dbReference type="ChEBI" id="CHEBI:15378"/>
        <dbReference type="ChEBI" id="CHEBI:30616"/>
        <dbReference type="ChEBI" id="CHEBI:33019"/>
        <dbReference type="ChEBI" id="CHEBI:33384"/>
        <dbReference type="ChEBI" id="CHEBI:78442"/>
        <dbReference type="ChEBI" id="CHEBI:78533"/>
        <dbReference type="ChEBI" id="CHEBI:456215"/>
        <dbReference type="EC" id="6.1.1.11"/>
    </reaction>
</comment>
<comment type="pathway">
    <text evidence="1">Aminoacyl-tRNA biosynthesis; selenocysteinyl-tRNA(Sec) biosynthesis; L-seryl-tRNA(Sec) from L-serine and tRNA(Sec): step 1/1.</text>
</comment>
<comment type="subunit">
    <text evidence="1">Homodimer. The tRNA molecule binds across the dimer.</text>
</comment>
<comment type="subcellular location">
    <subcellularLocation>
        <location evidence="1">Cytoplasm</location>
    </subcellularLocation>
</comment>
<comment type="domain">
    <text evidence="1">Consists of two distinct domains, a catalytic core and a N-terminal extension that is involved in tRNA binding.</text>
</comment>
<comment type="similarity">
    <text evidence="1">Belongs to the class-II aminoacyl-tRNA synthetase family. Type-1 seryl-tRNA synthetase subfamily.</text>
</comment>
<name>SYS_PARP8</name>
<keyword id="KW-0030">Aminoacyl-tRNA synthetase</keyword>
<keyword id="KW-0067">ATP-binding</keyword>
<keyword id="KW-0963">Cytoplasm</keyword>
<keyword id="KW-0436">Ligase</keyword>
<keyword id="KW-0547">Nucleotide-binding</keyword>
<keyword id="KW-0648">Protein biosynthesis</keyword>
<keyword id="KW-1185">Reference proteome</keyword>
<proteinExistence type="inferred from homology"/>
<reference key="1">
    <citation type="journal article" date="2014" name="Stand. Genomic Sci.">
        <title>Complete genome sequence of Burkholderia phymatum STM815(T), a broad host range and efficient nitrogen-fixing symbiont of Mimosa species.</title>
        <authorList>
            <person name="Moulin L."/>
            <person name="Klonowska A."/>
            <person name="Caroline B."/>
            <person name="Booth K."/>
            <person name="Vriezen J.A."/>
            <person name="Melkonian R."/>
            <person name="James E.K."/>
            <person name="Young J.P."/>
            <person name="Bena G."/>
            <person name="Hauser L."/>
            <person name="Land M."/>
            <person name="Kyrpides N."/>
            <person name="Bruce D."/>
            <person name="Chain P."/>
            <person name="Copeland A."/>
            <person name="Pitluck S."/>
            <person name="Woyke T."/>
            <person name="Lizotte-Waniewski M."/>
            <person name="Bristow J."/>
            <person name="Riley M."/>
        </authorList>
    </citation>
    <scope>NUCLEOTIDE SEQUENCE [LARGE SCALE GENOMIC DNA]</scope>
    <source>
        <strain>DSM 17167 / CIP 108236 / LMG 21445 / STM815</strain>
    </source>
</reference>
<sequence length="432" mass="47617">MLDIQLLRKDIDGVAKRLADRGYILDVAAFSALEAERRAIQTRTEELQAKRNSLSKQIGAMKGRGEDTSAVMAEVGGIGDEMKASAVQLEDIQKRLSDLLLGVPNLAHESVPVGNDEAGNVEVRRWGTPRQFDFEIKDHVDVGTPLGLDFETGAKLSGARFTLLRGQIARLHRALAQFMIDTHTQQHGYTEVYTPYIVNPEILFGTGQLPKFADDMFRVEKGGGENTVTQYLISTSEISLTNTVRDSIVDSNELPIKLTAHSPCFRSEAGSYGRDTRGMIRQHQFDKVEMVQIVSPDTSYDALEQMVAHAEVILQKLELPYRVITLCTGDMGFSAAKTYDLEVWVPAQNTYREISSCSNTEAFQARRMQARFRNAQGKPELVHTLNGSGLAVGRTLVAVLENFQNADGSVTVPAALRPYLGGVDRLEVKASA</sequence>
<organism>
    <name type="scientific">Paraburkholderia phymatum (strain DSM 17167 / CIP 108236 / LMG 21445 / STM815)</name>
    <name type="common">Burkholderia phymatum</name>
    <dbReference type="NCBI Taxonomy" id="391038"/>
    <lineage>
        <taxon>Bacteria</taxon>
        <taxon>Pseudomonadati</taxon>
        <taxon>Pseudomonadota</taxon>
        <taxon>Betaproteobacteria</taxon>
        <taxon>Burkholderiales</taxon>
        <taxon>Burkholderiaceae</taxon>
        <taxon>Paraburkholderia</taxon>
    </lineage>
</organism>
<protein>
    <recommendedName>
        <fullName evidence="1">Serine--tRNA ligase</fullName>
        <ecNumber evidence="1">6.1.1.11</ecNumber>
    </recommendedName>
    <alternativeName>
        <fullName evidence="1">Seryl-tRNA synthetase</fullName>
        <shortName evidence="1">SerRS</shortName>
    </alternativeName>
    <alternativeName>
        <fullName evidence="1">Seryl-tRNA(Ser/Sec) synthetase</fullName>
    </alternativeName>
</protein>